<accession>P9WKN0</accession>
<accession>L0T880</accession>
<accession>P0A5D7</accession>
<accession>P71551</accession>
<protein>
    <recommendedName>
        <fullName>Uncharacterized protein MT0986</fullName>
    </recommendedName>
</protein>
<reference key="1">
    <citation type="journal article" date="2002" name="J. Bacteriol.">
        <title>Whole-genome comparison of Mycobacterium tuberculosis clinical and laboratory strains.</title>
        <authorList>
            <person name="Fleischmann R.D."/>
            <person name="Alland D."/>
            <person name="Eisen J.A."/>
            <person name="Carpenter L."/>
            <person name="White O."/>
            <person name="Peterson J.D."/>
            <person name="DeBoy R.T."/>
            <person name="Dodson R.J."/>
            <person name="Gwinn M.L."/>
            <person name="Haft D.H."/>
            <person name="Hickey E.K."/>
            <person name="Kolonay J.F."/>
            <person name="Nelson W.C."/>
            <person name="Umayam L.A."/>
            <person name="Ermolaeva M.D."/>
            <person name="Salzberg S.L."/>
            <person name="Delcher A."/>
            <person name="Utterback T.R."/>
            <person name="Weidman J.F."/>
            <person name="Khouri H.M."/>
            <person name="Gill J."/>
            <person name="Mikula A."/>
            <person name="Bishai W."/>
            <person name="Jacobs W.R. Jr."/>
            <person name="Venter J.C."/>
            <person name="Fraser C.M."/>
        </authorList>
    </citation>
    <scope>NUCLEOTIDE SEQUENCE [LARGE SCALE GENOMIC DNA]</scope>
    <source>
        <strain>CDC 1551 / Oshkosh</strain>
    </source>
</reference>
<feature type="chain" id="PRO_0000427625" description="Uncharacterized protein MT0986">
    <location>
        <begin position="1"/>
        <end position="672"/>
    </location>
</feature>
<feature type="region of interest" description="Disordered" evidence="1">
    <location>
        <begin position="1"/>
        <end position="40"/>
    </location>
</feature>
<feature type="compositionally biased region" description="Basic and acidic residues" evidence="1">
    <location>
        <begin position="1"/>
        <end position="10"/>
    </location>
</feature>
<keyword id="KW-1185">Reference proteome</keyword>
<evidence type="ECO:0000256" key="1">
    <source>
        <dbReference type="SAM" id="MobiDB-lite"/>
    </source>
</evidence>
<sequence length="672" mass="74664">MAKSDGDDPLRPASPRLRSSRRHSLRYSAYTGGPDPLAPPVDLRDALEQIGQDVMAGASPRRALSELLRRGTRNLTGADRLAAEVNRRRRELLRRNNLDGTLQEIKKLLDEAVLAERKELARALDDDARFAELQLDALPVSPAKAVQELAEYRWRSGQAREKYEQIKDLLGRELLDQRFAGMKQALAGATDDDRRRVTEMLDDLNDLLDKHARGEDTQRDFDEFMTKHGEFFPENPRNVEELLDSLAKRAAAAQRFRNSLSQEQRDELDALAQQAFGSPALMRALDRLDAHLQAARPGEDWTGSQQFSGDNPFGMGEGTQALADIAELEQLAEQLSQSYPGASMDDVDLDALARQLGDQAAVDARTLAELERALVNQGFLDRGSDGQWRLSPKAMRRLGETALRDVAQQLSGRHGERDHRRAGAAGELTGATRPWQFGDTEPWHVARTLTNAVLRQAAAVHDRIRITVEDVEVAETETRTQAAVALLVDTSFSMVMENRWLPMKRTALALHHLVCTRFRSDALQIIAFGRYARTVTAAELTGLAGVYEQGTNLHHALALAGRHLRRHAGAQPVVLVVTDGEPTAHLEDFDGDGTSVFFDYPPHPRTIAHTVRGFDDMARLGAQVTIFRLGSDPGLARFIDQVARRVQGRVVVPDLDGLGAAVVGDYLRFRRR</sequence>
<proteinExistence type="predicted"/>
<organism>
    <name type="scientific">Mycobacterium tuberculosis (strain CDC 1551 / Oshkosh)</name>
    <dbReference type="NCBI Taxonomy" id="83331"/>
    <lineage>
        <taxon>Bacteria</taxon>
        <taxon>Bacillati</taxon>
        <taxon>Actinomycetota</taxon>
        <taxon>Actinomycetes</taxon>
        <taxon>Mycobacteriales</taxon>
        <taxon>Mycobacteriaceae</taxon>
        <taxon>Mycobacterium</taxon>
        <taxon>Mycobacterium tuberculosis complex</taxon>
    </lineage>
</organism>
<dbReference type="EMBL" id="AE000516">
    <property type="protein sequence ID" value="AAK45234.1"/>
    <property type="molecule type" value="Genomic_DNA"/>
</dbReference>
<dbReference type="PIR" id="E70717">
    <property type="entry name" value="E70717"/>
</dbReference>
<dbReference type="RefSeq" id="WP_003917379.1">
    <property type="nucleotide sequence ID" value="NC_002755.2"/>
</dbReference>
<dbReference type="SMR" id="P9WKN0"/>
<dbReference type="KEGG" id="mtc:MT0986"/>
<dbReference type="PATRIC" id="fig|83331.31.peg.1058"/>
<dbReference type="HOGENOM" id="CLU_408088_0_0_11"/>
<dbReference type="Proteomes" id="UP000001020">
    <property type="component" value="Chromosome"/>
</dbReference>
<dbReference type="CDD" id="cd00198">
    <property type="entry name" value="vWFA"/>
    <property type="match status" value="1"/>
</dbReference>
<dbReference type="FunFam" id="3.40.50.410:FF:000066">
    <property type="entry name" value="von Willebrand factor, type A"/>
    <property type="match status" value="1"/>
</dbReference>
<dbReference type="Gene3D" id="3.40.50.410">
    <property type="entry name" value="von Willebrand factor, type A domain"/>
    <property type="match status" value="1"/>
</dbReference>
<dbReference type="InterPro" id="IPR002035">
    <property type="entry name" value="VWF_A"/>
</dbReference>
<dbReference type="InterPro" id="IPR036465">
    <property type="entry name" value="vWFA_dom_sf"/>
</dbReference>
<dbReference type="SMART" id="SM00327">
    <property type="entry name" value="VWA"/>
    <property type="match status" value="1"/>
</dbReference>
<dbReference type="SUPFAM" id="SSF53300">
    <property type="entry name" value="vWA-like"/>
    <property type="match status" value="1"/>
</dbReference>
<gene>
    <name type="ordered locus">MT0986</name>
</gene>
<name>Y959_MYCTO</name>